<proteinExistence type="inferred from homology"/>
<reference key="1">
    <citation type="journal article" date="2006" name="Genome Res.">
        <title>Massive genome erosion and functional adaptations provide insights into the symbiotic lifestyle of Sodalis glossinidius in the tsetse host.</title>
        <authorList>
            <person name="Toh H."/>
            <person name="Weiss B.L."/>
            <person name="Perkin S.A.H."/>
            <person name="Yamashita A."/>
            <person name="Oshima K."/>
            <person name="Hattori M."/>
            <person name="Aksoy S."/>
        </authorList>
    </citation>
    <scope>NUCLEOTIDE SEQUENCE [LARGE SCALE GENOMIC DNA]</scope>
    <source>
        <strain>morsitans</strain>
    </source>
</reference>
<dbReference type="EC" id="2.4.1.15" evidence="1"/>
<dbReference type="EMBL" id="AP008232">
    <property type="protein sequence ID" value="BAE74516.1"/>
    <property type="molecule type" value="Genomic_DNA"/>
</dbReference>
<dbReference type="RefSeq" id="WP_011411070.1">
    <property type="nucleotide sequence ID" value="NC_007712.1"/>
</dbReference>
<dbReference type="SMR" id="Q2NTK9"/>
<dbReference type="STRING" id="343509.SG1241"/>
<dbReference type="CAZy" id="GT20">
    <property type="family name" value="Glycosyltransferase Family 20"/>
</dbReference>
<dbReference type="KEGG" id="sgl:SG1241"/>
<dbReference type="eggNOG" id="COG0380">
    <property type="taxonomic scope" value="Bacteria"/>
</dbReference>
<dbReference type="HOGENOM" id="CLU_002351_7_1_6"/>
<dbReference type="OrthoDB" id="9815690at2"/>
<dbReference type="UniPathway" id="UPA00299"/>
<dbReference type="Proteomes" id="UP000001932">
    <property type="component" value="Chromosome"/>
</dbReference>
<dbReference type="GO" id="GO:0003825">
    <property type="term" value="F:alpha,alpha-trehalose-phosphate synthase (UDP-forming) activity"/>
    <property type="evidence" value="ECO:0007669"/>
    <property type="project" value="UniProtKB-EC"/>
</dbReference>
<dbReference type="GO" id="GO:0005992">
    <property type="term" value="P:trehalose biosynthetic process"/>
    <property type="evidence" value="ECO:0007669"/>
    <property type="project" value="UniProtKB-UniPathway"/>
</dbReference>
<dbReference type="CDD" id="cd03788">
    <property type="entry name" value="GT20_TPS"/>
    <property type="match status" value="1"/>
</dbReference>
<dbReference type="FunFam" id="3.40.50.2000:FF:000024">
    <property type="entry name" value="Trehalose-6-phosphate synthase"/>
    <property type="match status" value="1"/>
</dbReference>
<dbReference type="Gene3D" id="3.40.50.2000">
    <property type="entry name" value="Glycogen Phosphorylase B"/>
    <property type="match status" value="2"/>
</dbReference>
<dbReference type="InterPro" id="IPR001830">
    <property type="entry name" value="Glyco_trans_20"/>
</dbReference>
<dbReference type="InterPro" id="IPR012766">
    <property type="entry name" value="Trehalose_OtsA"/>
</dbReference>
<dbReference type="NCBIfam" id="NF007513">
    <property type="entry name" value="PRK10117.1"/>
    <property type="match status" value="1"/>
</dbReference>
<dbReference type="NCBIfam" id="TIGR02400">
    <property type="entry name" value="trehalose_OtsA"/>
    <property type="match status" value="1"/>
</dbReference>
<dbReference type="PANTHER" id="PTHR10788:SF106">
    <property type="entry name" value="BCDNA.GH08860"/>
    <property type="match status" value="1"/>
</dbReference>
<dbReference type="PANTHER" id="PTHR10788">
    <property type="entry name" value="TREHALOSE-6-PHOSPHATE SYNTHASE"/>
    <property type="match status" value="1"/>
</dbReference>
<dbReference type="Pfam" id="PF00982">
    <property type="entry name" value="Glyco_transf_20"/>
    <property type="match status" value="1"/>
</dbReference>
<dbReference type="SUPFAM" id="SSF53756">
    <property type="entry name" value="UDP-Glycosyltransferase/glycogen phosphorylase"/>
    <property type="match status" value="1"/>
</dbReference>
<evidence type="ECO:0000250" key="1">
    <source>
        <dbReference type="UniProtKB" id="P31677"/>
    </source>
</evidence>
<name>OTSA_SODGM</name>
<comment type="function">
    <text evidence="1">Probably involved in the osmoprotection via the biosynthesis of trehalose. Catalyzes the transfer of glucose from UDP-alpha-D-glucose (UDP-Glc) to D-glucose 6-phosphate (Glc-6-P) to form trehalose-6-phosphate. Acts with retention of the anomeric configuration of the UDP-sugar donor.</text>
</comment>
<comment type="catalytic activity">
    <reaction evidence="1">
        <text>D-glucose 6-phosphate + UDP-alpha-D-glucose = alpha,alpha-trehalose 6-phosphate + UDP + H(+)</text>
        <dbReference type="Rhea" id="RHEA:18889"/>
        <dbReference type="ChEBI" id="CHEBI:15378"/>
        <dbReference type="ChEBI" id="CHEBI:58223"/>
        <dbReference type="ChEBI" id="CHEBI:58429"/>
        <dbReference type="ChEBI" id="CHEBI:58885"/>
        <dbReference type="ChEBI" id="CHEBI:61548"/>
        <dbReference type="EC" id="2.4.1.15"/>
    </reaction>
</comment>
<comment type="pathway">
    <text evidence="1">Glycan biosynthesis; trehalose biosynthesis.</text>
</comment>
<comment type="subunit">
    <text evidence="1">Homotetramer.</text>
</comment>
<comment type="similarity">
    <text evidence="1">Belongs to the glycosyltransferase 20 family.</text>
</comment>
<keyword id="KW-0328">Glycosyltransferase</keyword>
<keyword id="KW-0808">Transferase</keyword>
<gene>
    <name evidence="1" type="primary">otsA</name>
    <name type="ordered locus">SG1241</name>
</gene>
<accession>Q2NTK9</accession>
<protein>
    <recommendedName>
        <fullName evidence="1">Trehalose-6-phosphate synthase</fullName>
        <shortName evidence="1">TPS</shortName>
        <ecNumber evidence="1">2.4.1.15</ecNumber>
    </recommendedName>
    <alternativeName>
        <fullName evidence="1">Alpha,alpha-trehalose-phosphate synthase [UDP-forming]</fullName>
    </alternativeName>
    <alternativeName>
        <fullName evidence="1">Osmoregulatory trehalose synthesis protein A</fullName>
        <shortName evidence="1">OtsA</shortName>
    </alternativeName>
    <alternativeName>
        <fullName evidence="1">UDP-glucose-glucosephosphate glucosyltransferase</fullName>
    </alternativeName>
</protein>
<sequence length="469" mass="53446">MSRLVVVSNRIAAIEGKKESAGGLAVGIMDSLKDQGGLWFGWNGKISEEDEPLEKNQQDNITFAAFSLKQSEYDQYYLNFSNTVIWPAFHYRLDLVQYQREDYDGYCRVNEMLAGRLKPLVNEDDILWIHDYHLLPFAAACRKLGMKNRIGFFLHIPFPTSEIFNALPPRKELLEKLCEYDLVGFQAESDRQAFIENLALVTTVEDLDDDRIKAYNKLVTARVYPIGVEPESIRELAEGPLPPKLAHLRDKMNGQLIISVDRLDYSKGLPERFQAYETLLENYPQHRGNIRYFQIAPTSRGDVQAYQDIRHELETEAGRINGHFSTLEWTPLFYLNQHYERSLLMKIFRHCEVGLVTPLRDGMNLVAKEYVASQNPNDPGVLILSHFAGAANELTSALLVNPYDRDGVASALDKALSMPLSERKARYQEMIAVIKQNDIVHWCQSFLDDLKKIPSKAEIVGQAVSGATR</sequence>
<feature type="chain" id="PRO_0000348921" description="Trehalose-6-phosphate synthase">
    <location>
        <begin position="1"/>
        <end position="469"/>
    </location>
</feature>
<feature type="binding site" evidence="1">
    <location>
        <position position="10"/>
    </location>
    <ligand>
        <name>D-glucose 6-phosphate</name>
        <dbReference type="ChEBI" id="CHEBI:61548"/>
    </ligand>
</feature>
<feature type="binding site" evidence="1">
    <location>
        <begin position="22"/>
        <end position="23"/>
    </location>
    <ligand>
        <name>UDP-alpha-D-glucose</name>
        <dbReference type="ChEBI" id="CHEBI:58885"/>
    </ligand>
</feature>
<feature type="binding site" evidence="1">
    <location>
        <position position="77"/>
    </location>
    <ligand>
        <name>D-glucose 6-phosphate</name>
        <dbReference type="ChEBI" id="CHEBI:61548"/>
    </ligand>
</feature>
<feature type="binding site" evidence="1">
    <location>
        <position position="131"/>
    </location>
    <ligand>
        <name>D-glucose 6-phosphate</name>
        <dbReference type="ChEBI" id="CHEBI:61548"/>
    </ligand>
</feature>
<feature type="binding site" evidence="1">
    <location>
        <position position="262"/>
    </location>
    <ligand>
        <name>UDP-alpha-D-glucose</name>
        <dbReference type="ChEBI" id="CHEBI:58885"/>
    </ligand>
</feature>
<feature type="binding site" evidence="1">
    <location>
        <position position="267"/>
    </location>
    <ligand>
        <name>UDP-alpha-D-glucose</name>
        <dbReference type="ChEBI" id="CHEBI:58885"/>
    </ligand>
</feature>
<feature type="binding site" evidence="1">
    <location>
        <position position="300"/>
    </location>
    <ligand>
        <name>D-glucose 6-phosphate</name>
        <dbReference type="ChEBI" id="CHEBI:61548"/>
    </ligand>
</feature>
<feature type="binding site" evidence="1">
    <location>
        <begin position="365"/>
        <end position="369"/>
    </location>
    <ligand>
        <name>UDP-alpha-D-glucose</name>
        <dbReference type="ChEBI" id="CHEBI:58885"/>
    </ligand>
</feature>
<feature type="site" description="Involved in alpha anomer selectivity" evidence="1">
    <location>
        <position position="86"/>
    </location>
</feature>
<feature type="site" description="Involved in alpha anomer selectivity" evidence="1">
    <location>
        <position position="156"/>
    </location>
</feature>
<organism>
    <name type="scientific">Sodalis glossinidius (strain morsitans)</name>
    <dbReference type="NCBI Taxonomy" id="343509"/>
    <lineage>
        <taxon>Bacteria</taxon>
        <taxon>Pseudomonadati</taxon>
        <taxon>Pseudomonadota</taxon>
        <taxon>Gammaproteobacteria</taxon>
        <taxon>Enterobacterales</taxon>
        <taxon>Bruguierivoracaceae</taxon>
        <taxon>Sodalis</taxon>
    </lineage>
</organism>